<keyword id="KW-0963">Cytoplasm</keyword>
<keyword id="KW-0648">Protein biosynthesis</keyword>
<keyword id="KW-1185">Reference proteome</keyword>
<reference key="1">
    <citation type="journal article" date="2008" name="Proc. Natl. Acad. Sci. U.S.A.">
        <title>The genome of Clostridium kluyveri, a strict anaerobe with unique metabolic features.</title>
        <authorList>
            <person name="Seedorf H."/>
            <person name="Fricke W.F."/>
            <person name="Veith B."/>
            <person name="Brueggemann H."/>
            <person name="Liesegang H."/>
            <person name="Strittmatter A."/>
            <person name="Miethke M."/>
            <person name="Buckel W."/>
            <person name="Hinderberger J."/>
            <person name="Li F."/>
            <person name="Hagemeier C."/>
            <person name="Thauer R.K."/>
            <person name="Gottschalk G."/>
        </authorList>
    </citation>
    <scope>NUCLEOTIDE SEQUENCE [LARGE SCALE GENOMIC DNA]</scope>
    <source>
        <strain>ATCC 8527 / DSM 555 / NBRC 12016 / NCIMB 10680 / K1</strain>
    </source>
</reference>
<proteinExistence type="inferred from homology"/>
<protein>
    <recommendedName>
        <fullName evidence="1">Ribosome-recycling factor</fullName>
        <shortName evidence="1">RRF</shortName>
    </recommendedName>
    <alternativeName>
        <fullName evidence="1">Ribosome-releasing factor</fullName>
    </alternativeName>
</protein>
<sequence>MIKDILNKADEKMNKTVDVLVKELASMKAGRANPAILDKIEVEYYGAMTPISQLAGISIPEARILAIQPWDKSALKSIEKAILKSDLGINPSNDGEIIRLIIPELTEETRKNIVKNIKKTGEDSKVAIRGIRRECNDKFKALKKKNDISEDEIKKGEEQIQKKTDIFIKNIDAILEKKEKEIMSL</sequence>
<evidence type="ECO:0000255" key="1">
    <source>
        <dbReference type="HAMAP-Rule" id="MF_00040"/>
    </source>
</evidence>
<comment type="function">
    <text evidence="1">Responsible for the release of ribosomes from messenger RNA at the termination of protein biosynthesis. May increase the efficiency of translation by recycling ribosomes from one round of translation to another.</text>
</comment>
<comment type="subcellular location">
    <subcellularLocation>
        <location evidence="1">Cytoplasm</location>
    </subcellularLocation>
</comment>
<comment type="similarity">
    <text evidence="1">Belongs to the RRF family.</text>
</comment>
<dbReference type="EMBL" id="CP000673">
    <property type="protein sequence ID" value="EDK33462.1"/>
    <property type="molecule type" value="Genomic_DNA"/>
</dbReference>
<dbReference type="RefSeq" id="WP_012101809.1">
    <property type="nucleotide sequence ID" value="NC_009706.1"/>
</dbReference>
<dbReference type="SMR" id="A5N831"/>
<dbReference type="STRING" id="431943.CKL_1420"/>
<dbReference type="KEGG" id="ckl:CKL_1420"/>
<dbReference type="eggNOG" id="COG0233">
    <property type="taxonomic scope" value="Bacteria"/>
</dbReference>
<dbReference type="HOGENOM" id="CLU_073981_2_0_9"/>
<dbReference type="Proteomes" id="UP000002411">
    <property type="component" value="Chromosome"/>
</dbReference>
<dbReference type="GO" id="GO:0005737">
    <property type="term" value="C:cytoplasm"/>
    <property type="evidence" value="ECO:0007669"/>
    <property type="project" value="UniProtKB-SubCell"/>
</dbReference>
<dbReference type="GO" id="GO:0043023">
    <property type="term" value="F:ribosomal large subunit binding"/>
    <property type="evidence" value="ECO:0007669"/>
    <property type="project" value="TreeGrafter"/>
</dbReference>
<dbReference type="GO" id="GO:0006415">
    <property type="term" value="P:translational termination"/>
    <property type="evidence" value="ECO:0007669"/>
    <property type="project" value="UniProtKB-UniRule"/>
</dbReference>
<dbReference type="CDD" id="cd00520">
    <property type="entry name" value="RRF"/>
    <property type="match status" value="1"/>
</dbReference>
<dbReference type="FunFam" id="1.10.132.20:FF:000001">
    <property type="entry name" value="Ribosome-recycling factor"/>
    <property type="match status" value="1"/>
</dbReference>
<dbReference type="FunFam" id="3.30.1360.40:FF:000001">
    <property type="entry name" value="Ribosome-recycling factor"/>
    <property type="match status" value="1"/>
</dbReference>
<dbReference type="Gene3D" id="3.30.1360.40">
    <property type="match status" value="1"/>
</dbReference>
<dbReference type="Gene3D" id="1.10.132.20">
    <property type="entry name" value="Ribosome-recycling factor"/>
    <property type="match status" value="1"/>
</dbReference>
<dbReference type="HAMAP" id="MF_00040">
    <property type="entry name" value="RRF"/>
    <property type="match status" value="1"/>
</dbReference>
<dbReference type="InterPro" id="IPR002661">
    <property type="entry name" value="Ribosome_recyc_fac"/>
</dbReference>
<dbReference type="InterPro" id="IPR023584">
    <property type="entry name" value="Ribosome_recyc_fac_dom"/>
</dbReference>
<dbReference type="InterPro" id="IPR036191">
    <property type="entry name" value="RRF_sf"/>
</dbReference>
<dbReference type="NCBIfam" id="TIGR00496">
    <property type="entry name" value="frr"/>
    <property type="match status" value="1"/>
</dbReference>
<dbReference type="PANTHER" id="PTHR20982:SF3">
    <property type="entry name" value="MITOCHONDRIAL RIBOSOME RECYCLING FACTOR PSEUDO 1"/>
    <property type="match status" value="1"/>
</dbReference>
<dbReference type="PANTHER" id="PTHR20982">
    <property type="entry name" value="RIBOSOME RECYCLING FACTOR"/>
    <property type="match status" value="1"/>
</dbReference>
<dbReference type="Pfam" id="PF01765">
    <property type="entry name" value="RRF"/>
    <property type="match status" value="1"/>
</dbReference>
<dbReference type="SUPFAM" id="SSF55194">
    <property type="entry name" value="Ribosome recycling factor, RRF"/>
    <property type="match status" value="1"/>
</dbReference>
<feature type="chain" id="PRO_1000074576" description="Ribosome-recycling factor">
    <location>
        <begin position="1"/>
        <end position="185"/>
    </location>
</feature>
<organism>
    <name type="scientific">Clostridium kluyveri (strain ATCC 8527 / DSM 555 / NBRC 12016 / NCIMB 10680 / K1)</name>
    <dbReference type="NCBI Taxonomy" id="431943"/>
    <lineage>
        <taxon>Bacteria</taxon>
        <taxon>Bacillati</taxon>
        <taxon>Bacillota</taxon>
        <taxon>Clostridia</taxon>
        <taxon>Eubacteriales</taxon>
        <taxon>Clostridiaceae</taxon>
        <taxon>Clostridium</taxon>
    </lineage>
</organism>
<name>RRF_CLOK5</name>
<gene>
    <name evidence="1" type="primary">frr</name>
    <name type="ordered locus">CKL_1420</name>
</gene>
<accession>A5N831</accession>